<proteinExistence type="predicted"/>
<name>YMF31_MARPO</name>
<organism>
    <name type="scientific">Marchantia polymorpha</name>
    <name type="common">Common liverwort</name>
    <name type="synonym">Marchantia aquatica</name>
    <dbReference type="NCBI Taxonomy" id="3197"/>
    <lineage>
        <taxon>Eukaryota</taxon>
        <taxon>Viridiplantae</taxon>
        <taxon>Streptophyta</taxon>
        <taxon>Embryophyta</taxon>
        <taxon>Marchantiophyta</taxon>
        <taxon>Marchantiopsida</taxon>
        <taxon>Marchantiidae</taxon>
        <taxon>Marchantiales</taxon>
        <taxon>Marchantiaceae</taxon>
        <taxon>Marchantia</taxon>
    </lineage>
</organism>
<dbReference type="EMBL" id="M68929">
    <property type="protein sequence ID" value="AAC09437.1"/>
    <property type="molecule type" value="Genomic_DNA"/>
</dbReference>
<dbReference type="PIR" id="S25992">
    <property type="entry name" value="S25992"/>
</dbReference>
<dbReference type="GO" id="GO:0005739">
    <property type="term" value="C:mitochondrion"/>
    <property type="evidence" value="ECO:0007669"/>
    <property type="project" value="UniProtKB-SubCell"/>
</dbReference>
<feature type="chain" id="PRO_0000196858" description="Uncharacterized mitochondrial protein ymf31">
    <location>
        <begin position="1"/>
        <end position="61"/>
    </location>
</feature>
<gene>
    <name type="primary">YMF31</name>
</gene>
<comment type="subcellular location">
    <subcellularLocation>
        <location evidence="1">Mitochondrion</location>
    </subcellularLocation>
</comment>
<keyword id="KW-0496">Mitochondrion</keyword>
<protein>
    <recommendedName>
        <fullName>Uncharacterized mitochondrial protein ymf31</fullName>
    </recommendedName>
    <alternativeName>
        <fullName>ORF61</fullName>
    </alternativeName>
</protein>
<reference key="1">
    <citation type="journal article" date="1992" name="J. Mol. Biol.">
        <title>Gene organization deduced from the complete sequence of liverwort Marchantia polymorpha mitochondrial DNA. A primitive form of plant mitochondrial genome.</title>
        <authorList>
            <person name="Oda K."/>
            <person name="Yamato K."/>
            <person name="Ohta E."/>
            <person name="Nakamura Y."/>
            <person name="Takemura M."/>
            <person name="Nozato N."/>
            <person name="Akashi K."/>
            <person name="Kanegae T."/>
            <person name="Ogura Y."/>
            <person name="Kohchi T."/>
            <person name="Ohyama K."/>
        </authorList>
    </citation>
    <scope>NUCLEOTIDE SEQUENCE [GENOMIC DNA]</scope>
</reference>
<sequence>MVNLTVGNKNKSFTDQVGGFEWARIQLPESCGNGIFCTNTCYNNKGKRVAPGPVKLKHFWP</sequence>
<evidence type="ECO:0000305" key="1"/>
<geneLocation type="mitochondrion"/>
<accession>P38473</accession>